<keyword id="KW-1185">Reference proteome</keyword>
<comment type="function">
    <text evidence="1">Might be related to the phospholipid scramblase and tubby-like superfamily of membrane tethered transcription factors.</text>
</comment>
<comment type="similarity">
    <text evidence="2">Belongs to the LOR family.</text>
</comment>
<organism>
    <name type="scientific">Arabidopsis thaliana</name>
    <name type="common">Mouse-ear cress</name>
    <dbReference type="NCBI Taxonomy" id="3702"/>
    <lineage>
        <taxon>Eukaryota</taxon>
        <taxon>Viridiplantae</taxon>
        <taxon>Streptophyta</taxon>
        <taxon>Embryophyta</taxon>
        <taxon>Tracheophyta</taxon>
        <taxon>Spermatophyta</taxon>
        <taxon>Magnoliopsida</taxon>
        <taxon>eudicotyledons</taxon>
        <taxon>Gunneridae</taxon>
        <taxon>Pentapetalae</taxon>
        <taxon>rosids</taxon>
        <taxon>malvids</taxon>
        <taxon>Brassicales</taxon>
        <taxon>Brassicaceae</taxon>
        <taxon>Camelineae</taxon>
        <taxon>Arabidopsis</taxon>
    </lineage>
</organism>
<proteinExistence type="inferred from homology"/>
<feature type="chain" id="PRO_0000399245" description="Protein LURP-one-related 13">
    <location>
        <begin position="1"/>
        <end position="185"/>
    </location>
</feature>
<gene>
    <name type="ordered locus">At3g16900</name>
    <name type="ORF">K14A17.2</name>
</gene>
<dbReference type="EMBL" id="AB026636">
    <property type="protein sequence ID" value="BAA94974.1"/>
    <property type="molecule type" value="Genomic_DNA"/>
</dbReference>
<dbReference type="EMBL" id="CP002686">
    <property type="protein sequence ID" value="AEE75882.1"/>
    <property type="molecule type" value="Genomic_DNA"/>
</dbReference>
<dbReference type="RefSeq" id="NP_188315.1">
    <property type="nucleotide sequence ID" value="NM_112566.2"/>
</dbReference>
<dbReference type="SMR" id="Q9LSQ1"/>
<dbReference type="STRING" id="3702.Q9LSQ1"/>
<dbReference type="PaxDb" id="3702-AT3G16900.1"/>
<dbReference type="ProteomicsDB" id="238478"/>
<dbReference type="DNASU" id="820945"/>
<dbReference type="EnsemblPlants" id="AT3G16900.1">
    <property type="protein sequence ID" value="AT3G16900.1"/>
    <property type="gene ID" value="AT3G16900"/>
</dbReference>
<dbReference type="GeneID" id="820945"/>
<dbReference type="Gramene" id="AT3G16900.1">
    <property type="protein sequence ID" value="AT3G16900.1"/>
    <property type="gene ID" value="AT3G16900"/>
</dbReference>
<dbReference type="KEGG" id="ath:AT3G16900"/>
<dbReference type="Araport" id="AT3G16900"/>
<dbReference type="TAIR" id="AT3G16900"/>
<dbReference type="eggNOG" id="ENOG502QUU9">
    <property type="taxonomic scope" value="Eukaryota"/>
</dbReference>
<dbReference type="HOGENOM" id="CLU_063146_5_1_1"/>
<dbReference type="InParanoid" id="Q9LSQ1"/>
<dbReference type="OMA" id="KHNQTRE"/>
<dbReference type="OrthoDB" id="97518at2759"/>
<dbReference type="PhylomeDB" id="Q9LSQ1"/>
<dbReference type="PRO" id="PR:Q9LSQ1"/>
<dbReference type="Proteomes" id="UP000006548">
    <property type="component" value="Chromosome 3"/>
</dbReference>
<dbReference type="ExpressionAtlas" id="Q9LSQ1">
    <property type="expression patterns" value="baseline and differential"/>
</dbReference>
<dbReference type="Gene3D" id="2.40.160.200">
    <property type="entry name" value="LURP1-related"/>
    <property type="match status" value="1"/>
</dbReference>
<dbReference type="InterPro" id="IPR007612">
    <property type="entry name" value="LOR"/>
</dbReference>
<dbReference type="InterPro" id="IPR038595">
    <property type="entry name" value="LOR_sf"/>
</dbReference>
<dbReference type="InterPro" id="IPR025659">
    <property type="entry name" value="Tubby-like_C"/>
</dbReference>
<dbReference type="PANTHER" id="PTHR31087">
    <property type="match status" value="1"/>
</dbReference>
<dbReference type="PANTHER" id="PTHR31087:SF152">
    <property type="entry name" value="PROTEIN LURP-ONE-RELATED 13"/>
    <property type="match status" value="1"/>
</dbReference>
<dbReference type="Pfam" id="PF04525">
    <property type="entry name" value="LOR"/>
    <property type="match status" value="1"/>
</dbReference>
<dbReference type="SUPFAM" id="SSF54518">
    <property type="entry name" value="Tubby C-terminal domain-like"/>
    <property type="match status" value="1"/>
</dbReference>
<evidence type="ECO:0000250" key="1"/>
<evidence type="ECO:0000305" key="2"/>
<name>LOR13_ARATH</name>
<sequence>MAKQDPTSSNTMLPLVGSEFVRPQPLDLTITGDTVKDATGNKVFKVKTPLFGLHNKRILVDPNDSPIVTMKMKVTSKHDRWQVYRGSDLDDKIFTVKRSSTVQLKTRVEVFLKHNQTRESSCDFTIKGRFMKRACTIYVADSTKIIAQVYEGHERLVATIYPNVDYAFIVTLIFIFDLINMGTGI</sequence>
<accession>Q9LSQ1</accession>
<protein>
    <recommendedName>
        <fullName>Protein LURP-one-related 13</fullName>
    </recommendedName>
</protein>
<reference key="1">
    <citation type="journal article" date="2000" name="DNA Res.">
        <title>Structural analysis of Arabidopsis thaliana chromosome 3. I. Sequence features of the regions of 4,504,864 bp covered by sixty P1 and TAC clones.</title>
        <authorList>
            <person name="Sato S."/>
            <person name="Nakamura Y."/>
            <person name="Kaneko T."/>
            <person name="Katoh T."/>
            <person name="Asamizu E."/>
            <person name="Tabata S."/>
        </authorList>
    </citation>
    <scope>NUCLEOTIDE SEQUENCE [LARGE SCALE GENOMIC DNA]</scope>
    <source>
        <strain>cv. Columbia</strain>
    </source>
</reference>
<reference key="2">
    <citation type="journal article" date="2017" name="Plant J.">
        <title>Araport11: a complete reannotation of the Arabidopsis thaliana reference genome.</title>
        <authorList>
            <person name="Cheng C.Y."/>
            <person name="Krishnakumar V."/>
            <person name="Chan A.P."/>
            <person name="Thibaud-Nissen F."/>
            <person name="Schobel S."/>
            <person name="Town C.D."/>
        </authorList>
    </citation>
    <scope>GENOME REANNOTATION</scope>
    <source>
        <strain>cv. Columbia</strain>
    </source>
</reference>